<proteinExistence type="inferred from homology"/>
<reference key="1">
    <citation type="journal article" date="2006" name="J. Bacteriol.">
        <title>Whole-genome sequence of Listeria welshimeri reveals common steps in genome reduction with Listeria innocua as compared to Listeria monocytogenes.</title>
        <authorList>
            <person name="Hain T."/>
            <person name="Steinweg C."/>
            <person name="Kuenne C.T."/>
            <person name="Billion A."/>
            <person name="Ghai R."/>
            <person name="Chatterjee S.S."/>
            <person name="Domann E."/>
            <person name="Kaerst U."/>
            <person name="Goesmann A."/>
            <person name="Bekel T."/>
            <person name="Bartels D."/>
            <person name="Kaiser O."/>
            <person name="Meyer F."/>
            <person name="Puehler A."/>
            <person name="Weisshaar B."/>
            <person name="Wehland J."/>
            <person name="Liang C."/>
            <person name="Dandekar T."/>
            <person name="Lampidis R."/>
            <person name="Kreft J."/>
            <person name="Goebel W."/>
            <person name="Chakraborty T."/>
        </authorList>
    </citation>
    <scope>NUCLEOTIDE SEQUENCE [LARGE SCALE GENOMIC DNA]</scope>
    <source>
        <strain>ATCC 35897 / DSM 20650 / CCUG 15529 / CIP 8149 / NCTC 11857 / SLCC 5334 / V8</strain>
    </source>
</reference>
<sequence length="419" mass="46426">MFKFNDEKGQLKCSFCGKTQDQVRKLVAGPGVYICDECIELCNEIIEEELGISEFVDFGEVPKPQEIRHILSDYVIGQERAKKALAVAVYNHYKRINSNETKEEEVELSKSNICLIGPTGSGKTLLAQTLARILNVPFAIADATSLTEAGYVGEDVENILLKLIQSADYDVEKAEKGIIYIDEIDKVARKSENPSITRDVSGEGVQQALLKILEGTVASVPPQGGRKHPHQELIQIDTGNILFIVGGAFDGIEQIVKNRMGEKVIGFGTDNAKLKEDETYLSRVVPEDLLKFGLIPEFIGRLPVIATLEQLDEAALVSILTEPKNALVKQYKRMLELDDVELEFEPTALIEIAKEAIERKTGARGLRSIIEQIMLEVMFEIPSRDDITKCIITEKAARGEEEPQLQLEDGSIIPIKTSA</sequence>
<feature type="chain" id="PRO_1000024578" description="ATP-dependent Clp protease ATP-binding subunit ClpX">
    <location>
        <begin position="1"/>
        <end position="419"/>
    </location>
</feature>
<feature type="domain" description="ClpX-type ZB" evidence="2">
    <location>
        <begin position="1"/>
        <end position="54"/>
    </location>
</feature>
<feature type="binding site" evidence="2">
    <location>
        <position position="13"/>
    </location>
    <ligand>
        <name>Zn(2+)</name>
        <dbReference type="ChEBI" id="CHEBI:29105"/>
    </ligand>
</feature>
<feature type="binding site" evidence="2">
    <location>
        <position position="16"/>
    </location>
    <ligand>
        <name>Zn(2+)</name>
        <dbReference type="ChEBI" id="CHEBI:29105"/>
    </ligand>
</feature>
<feature type="binding site" evidence="2">
    <location>
        <position position="35"/>
    </location>
    <ligand>
        <name>Zn(2+)</name>
        <dbReference type="ChEBI" id="CHEBI:29105"/>
    </ligand>
</feature>
<feature type="binding site" evidence="2">
    <location>
        <position position="38"/>
    </location>
    <ligand>
        <name>Zn(2+)</name>
        <dbReference type="ChEBI" id="CHEBI:29105"/>
    </ligand>
</feature>
<feature type="binding site" evidence="1">
    <location>
        <begin position="118"/>
        <end position="125"/>
    </location>
    <ligand>
        <name>ATP</name>
        <dbReference type="ChEBI" id="CHEBI:30616"/>
    </ligand>
</feature>
<comment type="function">
    <text evidence="1">ATP-dependent specificity component of the Clp protease. It directs the protease to specific substrates. Can perform chaperone functions in the absence of ClpP.</text>
</comment>
<comment type="subunit">
    <text evidence="1">Component of the ClpX-ClpP complex. Forms a hexameric ring that, in the presence of ATP, binds to fourteen ClpP subunits assembled into a disk-like structure with a central cavity, resembling the structure of eukaryotic proteasomes.</text>
</comment>
<comment type="similarity">
    <text evidence="1">Belongs to the ClpX chaperone family.</text>
</comment>
<keyword id="KW-0067">ATP-binding</keyword>
<keyword id="KW-0143">Chaperone</keyword>
<keyword id="KW-0479">Metal-binding</keyword>
<keyword id="KW-0547">Nucleotide-binding</keyword>
<keyword id="KW-0862">Zinc</keyword>
<evidence type="ECO:0000255" key="1">
    <source>
        <dbReference type="HAMAP-Rule" id="MF_00175"/>
    </source>
</evidence>
<evidence type="ECO:0000255" key="2">
    <source>
        <dbReference type="PROSITE-ProRule" id="PRU01250"/>
    </source>
</evidence>
<name>CLPX_LISW6</name>
<dbReference type="EMBL" id="AM263198">
    <property type="protein sequence ID" value="CAK20703.1"/>
    <property type="molecule type" value="Genomic_DNA"/>
</dbReference>
<dbReference type="RefSeq" id="WP_011702094.1">
    <property type="nucleotide sequence ID" value="NC_008555.1"/>
</dbReference>
<dbReference type="SMR" id="A0AI71"/>
<dbReference type="STRING" id="386043.lwe1285"/>
<dbReference type="GeneID" id="61189162"/>
<dbReference type="KEGG" id="lwe:lwe1285"/>
<dbReference type="eggNOG" id="COG1219">
    <property type="taxonomic scope" value="Bacteria"/>
</dbReference>
<dbReference type="HOGENOM" id="CLU_014218_8_2_9"/>
<dbReference type="OrthoDB" id="9804062at2"/>
<dbReference type="Proteomes" id="UP000000779">
    <property type="component" value="Chromosome"/>
</dbReference>
<dbReference type="GO" id="GO:0009376">
    <property type="term" value="C:HslUV protease complex"/>
    <property type="evidence" value="ECO:0007669"/>
    <property type="project" value="TreeGrafter"/>
</dbReference>
<dbReference type="GO" id="GO:0005524">
    <property type="term" value="F:ATP binding"/>
    <property type="evidence" value="ECO:0007669"/>
    <property type="project" value="UniProtKB-UniRule"/>
</dbReference>
<dbReference type="GO" id="GO:0016887">
    <property type="term" value="F:ATP hydrolysis activity"/>
    <property type="evidence" value="ECO:0007669"/>
    <property type="project" value="InterPro"/>
</dbReference>
<dbReference type="GO" id="GO:0140662">
    <property type="term" value="F:ATP-dependent protein folding chaperone"/>
    <property type="evidence" value="ECO:0007669"/>
    <property type="project" value="InterPro"/>
</dbReference>
<dbReference type="GO" id="GO:0046983">
    <property type="term" value="F:protein dimerization activity"/>
    <property type="evidence" value="ECO:0007669"/>
    <property type="project" value="InterPro"/>
</dbReference>
<dbReference type="GO" id="GO:0051082">
    <property type="term" value="F:unfolded protein binding"/>
    <property type="evidence" value="ECO:0007669"/>
    <property type="project" value="UniProtKB-UniRule"/>
</dbReference>
<dbReference type="GO" id="GO:0008270">
    <property type="term" value="F:zinc ion binding"/>
    <property type="evidence" value="ECO:0007669"/>
    <property type="project" value="InterPro"/>
</dbReference>
<dbReference type="GO" id="GO:0051301">
    <property type="term" value="P:cell division"/>
    <property type="evidence" value="ECO:0007669"/>
    <property type="project" value="TreeGrafter"/>
</dbReference>
<dbReference type="GO" id="GO:0051603">
    <property type="term" value="P:proteolysis involved in protein catabolic process"/>
    <property type="evidence" value="ECO:0007669"/>
    <property type="project" value="TreeGrafter"/>
</dbReference>
<dbReference type="CDD" id="cd19497">
    <property type="entry name" value="RecA-like_ClpX"/>
    <property type="match status" value="1"/>
</dbReference>
<dbReference type="FunFam" id="1.10.8.60:FF:000002">
    <property type="entry name" value="ATP-dependent Clp protease ATP-binding subunit ClpX"/>
    <property type="match status" value="1"/>
</dbReference>
<dbReference type="FunFam" id="3.40.50.300:FF:000005">
    <property type="entry name" value="ATP-dependent Clp protease ATP-binding subunit ClpX"/>
    <property type="match status" value="1"/>
</dbReference>
<dbReference type="Gene3D" id="1.10.8.60">
    <property type="match status" value="1"/>
</dbReference>
<dbReference type="Gene3D" id="6.20.220.10">
    <property type="entry name" value="ClpX chaperone, C4-type zinc finger domain"/>
    <property type="match status" value="1"/>
</dbReference>
<dbReference type="Gene3D" id="3.40.50.300">
    <property type="entry name" value="P-loop containing nucleotide triphosphate hydrolases"/>
    <property type="match status" value="1"/>
</dbReference>
<dbReference type="HAMAP" id="MF_00175">
    <property type="entry name" value="ClpX"/>
    <property type="match status" value="1"/>
</dbReference>
<dbReference type="InterPro" id="IPR003593">
    <property type="entry name" value="AAA+_ATPase"/>
</dbReference>
<dbReference type="InterPro" id="IPR050052">
    <property type="entry name" value="ATP-dep_Clp_protease_ClpX"/>
</dbReference>
<dbReference type="InterPro" id="IPR003959">
    <property type="entry name" value="ATPase_AAA_core"/>
</dbReference>
<dbReference type="InterPro" id="IPR019489">
    <property type="entry name" value="Clp_ATPase_C"/>
</dbReference>
<dbReference type="InterPro" id="IPR004487">
    <property type="entry name" value="Clp_protease_ATP-bd_su_ClpX"/>
</dbReference>
<dbReference type="InterPro" id="IPR046425">
    <property type="entry name" value="ClpX_bact"/>
</dbReference>
<dbReference type="InterPro" id="IPR027417">
    <property type="entry name" value="P-loop_NTPase"/>
</dbReference>
<dbReference type="InterPro" id="IPR010603">
    <property type="entry name" value="Znf_CppX_C4"/>
</dbReference>
<dbReference type="InterPro" id="IPR038366">
    <property type="entry name" value="Znf_CppX_C4_sf"/>
</dbReference>
<dbReference type="NCBIfam" id="TIGR00382">
    <property type="entry name" value="clpX"/>
    <property type="match status" value="1"/>
</dbReference>
<dbReference type="NCBIfam" id="NF003745">
    <property type="entry name" value="PRK05342.1"/>
    <property type="match status" value="1"/>
</dbReference>
<dbReference type="PANTHER" id="PTHR48102:SF7">
    <property type="entry name" value="ATP-DEPENDENT CLP PROTEASE ATP-BINDING SUBUNIT CLPX-LIKE, MITOCHONDRIAL"/>
    <property type="match status" value="1"/>
</dbReference>
<dbReference type="PANTHER" id="PTHR48102">
    <property type="entry name" value="ATP-DEPENDENT CLP PROTEASE ATP-BINDING SUBUNIT CLPX-LIKE, MITOCHONDRIAL-RELATED"/>
    <property type="match status" value="1"/>
</dbReference>
<dbReference type="Pfam" id="PF07724">
    <property type="entry name" value="AAA_2"/>
    <property type="match status" value="1"/>
</dbReference>
<dbReference type="Pfam" id="PF10431">
    <property type="entry name" value="ClpB_D2-small"/>
    <property type="match status" value="1"/>
</dbReference>
<dbReference type="Pfam" id="PF06689">
    <property type="entry name" value="zf-C4_ClpX"/>
    <property type="match status" value="1"/>
</dbReference>
<dbReference type="SMART" id="SM00382">
    <property type="entry name" value="AAA"/>
    <property type="match status" value="1"/>
</dbReference>
<dbReference type="SMART" id="SM01086">
    <property type="entry name" value="ClpB_D2-small"/>
    <property type="match status" value="1"/>
</dbReference>
<dbReference type="SMART" id="SM00994">
    <property type="entry name" value="zf-C4_ClpX"/>
    <property type="match status" value="1"/>
</dbReference>
<dbReference type="SUPFAM" id="SSF57716">
    <property type="entry name" value="Glucocorticoid receptor-like (DNA-binding domain)"/>
    <property type="match status" value="1"/>
</dbReference>
<dbReference type="SUPFAM" id="SSF52540">
    <property type="entry name" value="P-loop containing nucleoside triphosphate hydrolases"/>
    <property type="match status" value="1"/>
</dbReference>
<dbReference type="PROSITE" id="PS51902">
    <property type="entry name" value="CLPX_ZB"/>
    <property type="match status" value="1"/>
</dbReference>
<accession>A0AI71</accession>
<protein>
    <recommendedName>
        <fullName evidence="1">ATP-dependent Clp protease ATP-binding subunit ClpX</fullName>
    </recommendedName>
</protein>
<gene>
    <name evidence="1" type="primary">clpX</name>
    <name type="ordered locus">lwe1285</name>
</gene>
<organism>
    <name type="scientific">Listeria welshimeri serovar 6b (strain ATCC 35897 / DSM 20650 / CCUG 15529 / CIP 8149 / NCTC 11857 / SLCC 5334 / V8)</name>
    <dbReference type="NCBI Taxonomy" id="386043"/>
    <lineage>
        <taxon>Bacteria</taxon>
        <taxon>Bacillati</taxon>
        <taxon>Bacillota</taxon>
        <taxon>Bacilli</taxon>
        <taxon>Bacillales</taxon>
        <taxon>Listeriaceae</taxon>
        <taxon>Listeria</taxon>
    </lineage>
</organism>